<proteinExistence type="inferred from homology"/>
<protein>
    <recommendedName>
        <fullName evidence="1">Acetyl-coenzyme A synthetase</fullName>
        <shortName evidence="1">AcCoA synthetase</shortName>
        <shortName evidence="1">Acs</shortName>
        <ecNumber evidence="1">6.2.1.1</ecNumber>
    </recommendedName>
    <alternativeName>
        <fullName evidence="1">Acetate--CoA ligase</fullName>
    </alternativeName>
    <alternativeName>
        <fullName evidence="1">Acyl-activating enzyme</fullName>
    </alternativeName>
</protein>
<dbReference type="EC" id="6.2.1.1" evidence="1"/>
<dbReference type="EMBL" id="AE008917">
    <property type="protein sequence ID" value="AAL51420.1"/>
    <property type="status" value="ALT_INIT"/>
    <property type="molecule type" value="Genomic_DNA"/>
</dbReference>
<dbReference type="PIR" id="AI3281">
    <property type="entry name" value="AI3281"/>
</dbReference>
<dbReference type="SMR" id="Q8YJ48"/>
<dbReference type="GeneID" id="29592996"/>
<dbReference type="KEGG" id="bme:BMEI0238"/>
<dbReference type="KEGG" id="bmel:DK63_1193"/>
<dbReference type="PATRIC" id="fig|224914.52.peg.1260"/>
<dbReference type="eggNOG" id="COG0365">
    <property type="taxonomic scope" value="Bacteria"/>
</dbReference>
<dbReference type="Proteomes" id="UP000000419">
    <property type="component" value="Chromosome I"/>
</dbReference>
<dbReference type="GO" id="GO:0005829">
    <property type="term" value="C:cytosol"/>
    <property type="evidence" value="ECO:0007669"/>
    <property type="project" value="TreeGrafter"/>
</dbReference>
<dbReference type="GO" id="GO:0003987">
    <property type="term" value="F:acetate-CoA ligase activity"/>
    <property type="evidence" value="ECO:0007669"/>
    <property type="project" value="UniProtKB-UniRule"/>
</dbReference>
<dbReference type="GO" id="GO:0016208">
    <property type="term" value="F:AMP binding"/>
    <property type="evidence" value="ECO:0007669"/>
    <property type="project" value="InterPro"/>
</dbReference>
<dbReference type="GO" id="GO:0005524">
    <property type="term" value="F:ATP binding"/>
    <property type="evidence" value="ECO:0007669"/>
    <property type="project" value="UniProtKB-KW"/>
</dbReference>
<dbReference type="GO" id="GO:0046872">
    <property type="term" value="F:metal ion binding"/>
    <property type="evidence" value="ECO:0007669"/>
    <property type="project" value="UniProtKB-KW"/>
</dbReference>
<dbReference type="GO" id="GO:0019427">
    <property type="term" value="P:acetyl-CoA biosynthetic process from acetate"/>
    <property type="evidence" value="ECO:0007669"/>
    <property type="project" value="InterPro"/>
</dbReference>
<dbReference type="CDD" id="cd05966">
    <property type="entry name" value="ACS"/>
    <property type="match status" value="1"/>
</dbReference>
<dbReference type="FunFam" id="3.30.300.30:FF:000004">
    <property type="entry name" value="Acetyl-coenzyme A synthetase"/>
    <property type="match status" value="1"/>
</dbReference>
<dbReference type="FunFam" id="3.40.50.12780:FF:000001">
    <property type="entry name" value="Acetyl-coenzyme A synthetase"/>
    <property type="match status" value="1"/>
</dbReference>
<dbReference type="Gene3D" id="3.30.300.30">
    <property type="match status" value="1"/>
</dbReference>
<dbReference type="Gene3D" id="3.40.50.12780">
    <property type="entry name" value="N-terminal domain of ligase-like"/>
    <property type="match status" value="1"/>
</dbReference>
<dbReference type="HAMAP" id="MF_01123">
    <property type="entry name" value="Ac_CoA_synth"/>
    <property type="match status" value="1"/>
</dbReference>
<dbReference type="InterPro" id="IPR011904">
    <property type="entry name" value="Ac_CoA_lig"/>
</dbReference>
<dbReference type="InterPro" id="IPR032387">
    <property type="entry name" value="ACAS_N"/>
</dbReference>
<dbReference type="InterPro" id="IPR025110">
    <property type="entry name" value="AMP-bd_C"/>
</dbReference>
<dbReference type="InterPro" id="IPR045851">
    <property type="entry name" value="AMP-bd_C_sf"/>
</dbReference>
<dbReference type="InterPro" id="IPR020845">
    <property type="entry name" value="AMP-binding_CS"/>
</dbReference>
<dbReference type="InterPro" id="IPR000873">
    <property type="entry name" value="AMP-dep_synth/lig_dom"/>
</dbReference>
<dbReference type="InterPro" id="IPR042099">
    <property type="entry name" value="ANL_N_sf"/>
</dbReference>
<dbReference type="NCBIfam" id="TIGR02188">
    <property type="entry name" value="Ac_CoA_lig_AcsA"/>
    <property type="match status" value="1"/>
</dbReference>
<dbReference type="NCBIfam" id="NF001208">
    <property type="entry name" value="PRK00174.1"/>
    <property type="match status" value="1"/>
</dbReference>
<dbReference type="PANTHER" id="PTHR24095">
    <property type="entry name" value="ACETYL-COENZYME A SYNTHETASE"/>
    <property type="match status" value="1"/>
</dbReference>
<dbReference type="PANTHER" id="PTHR24095:SF14">
    <property type="entry name" value="ACETYL-COENZYME A SYNTHETASE 1"/>
    <property type="match status" value="1"/>
</dbReference>
<dbReference type="Pfam" id="PF16177">
    <property type="entry name" value="ACAS_N"/>
    <property type="match status" value="1"/>
</dbReference>
<dbReference type="Pfam" id="PF00501">
    <property type="entry name" value="AMP-binding"/>
    <property type="match status" value="1"/>
</dbReference>
<dbReference type="Pfam" id="PF13193">
    <property type="entry name" value="AMP-binding_C"/>
    <property type="match status" value="1"/>
</dbReference>
<dbReference type="SUPFAM" id="SSF56801">
    <property type="entry name" value="Acetyl-CoA synthetase-like"/>
    <property type="match status" value="1"/>
</dbReference>
<dbReference type="PROSITE" id="PS00455">
    <property type="entry name" value="AMP_BINDING"/>
    <property type="match status" value="1"/>
</dbReference>
<feature type="chain" id="PRO_0000208356" description="Acetyl-coenzyme A synthetase">
    <location>
        <begin position="1"/>
        <end position="651"/>
    </location>
</feature>
<feature type="binding site" evidence="1">
    <location>
        <begin position="189"/>
        <end position="192"/>
    </location>
    <ligand>
        <name>CoA</name>
        <dbReference type="ChEBI" id="CHEBI:57287"/>
    </ligand>
</feature>
<feature type="binding site" evidence="1">
    <location>
        <position position="311"/>
    </location>
    <ligand>
        <name>CoA</name>
        <dbReference type="ChEBI" id="CHEBI:57287"/>
    </ligand>
</feature>
<feature type="binding site" evidence="1">
    <location>
        <position position="335"/>
    </location>
    <ligand>
        <name>CoA</name>
        <dbReference type="ChEBI" id="CHEBI:57287"/>
    </ligand>
</feature>
<feature type="binding site" evidence="1">
    <location>
        <begin position="387"/>
        <end position="389"/>
    </location>
    <ligand>
        <name>ATP</name>
        <dbReference type="ChEBI" id="CHEBI:30616"/>
    </ligand>
</feature>
<feature type="binding site" evidence="1">
    <location>
        <begin position="411"/>
        <end position="416"/>
    </location>
    <ligand>
        <name>ATP</name>
        <dbReference type="ChEBI" id="CHEBI:30616"/>
    </ligand>
</feature>
<feature type="binding site" evidence="1">
    <location>
        <position position="500"/>
    </location>
    <ligand>
        <name>ATP</name>
        <dbReference type="ChEBI" id="CHEBI:30616"/>
    </ligand>
</feature>
<feature type="binding site" evidence="1">
    <location>
        <position position="515"/>
    </location>
    <ligand>
        <name>ATP</name>
        <dbReference type="ChEBI" id="CHEBI:30616"/>
    </ligand>
</feature>
<feature type="binding site" evidence="1">
    <location>
        <position position="523"/>
    </location>
    <ligand>
        <name>CoA</name>
        <dbReference type="ChEBI" id="CHEBI:57287"/>
    </ligand>
</feature>
<feature type="binding site" evidence="1">
    <location>
        <position position="526"/>
    </location>
    <ligand>
        <name>ATP</name>
        <dbReference type="ChEBI" id="CHEBI:30616"/>
    </ligand>
</feature>
<feature type="binding site" evidence="1">
    <location>
        <position position="537"/>
    </location>
    <ligand>
        <name>Mg(2+)</name>
        <dbReference type="ChEBI" id="CHEBI:18420"/>
    </ligand>
</feature>
<feature type="binding site" evidence="1">
    <location>
        <position position="539"/>
    </location>
    <ligand>
        <name>Mg(2+)</name>
        <dbReference type="ChEBI" id="CHEBI:18420"/>
    </ligand>
</feature>
<feature type="binding site" evidence="1">
    <location>
        <position position="542"/>
    </location>
    <ligand>
        <name>Mg(2+)</name>
        <dbReference type="ChEBI" id="CHEBI:18420"/>
    </ligand>
</feature>
<feature type="binding site">
    <location>
        <position position="586"/>
    </location>
    <ligand>
        <name>CoA</name>
        <dbReference type="ChEBI" id="CHEBI:57287"/>
    </ligand>
</feature>
<feature type="modified residue" description="N6-acetyllysine" evidence="1">
    <location>
        <position position="611"/>
    </location>
</feature>
<organism>
    <name type="scientific">Brucella melitensis biotype 1 (strain ATCC 23456 / CCUG 17765 / NCTC 10094 / 16M)</name>
    <dbReference type="NCBI Taxonomy" id="224914"/>
    <lineage>
        <taxon>Bacteria</taxon>
        <taxon>Pseudomonadati</taxon>
        <taxon>Pseudomonadota</taxon>
        <taxon>Alphaproteobacteria</taxon>
        <taxon>Hyphomicrobiales</taxon>
        <taxon>Brucellaceae</taxon>
        <taxon>Brucella/Ochrobactrum group</taxon>
        <taxon>Brucella</taxon>
    </lineage>
</organism>
<keyword id="KW-0007">Acetylation</keyword>
<keyword id="KW-0067">ATP-binding</keyword>
<keyword id="KW-0436">Ligase</keyword>
<keyword id="KW-0460">Magnesium</keyword>
<keyword id="KW-0479">Metal-binding</keyword>
<keyword id="KW-0547">Nucleotide-binding</keyword>
<gene>
    <name evidence="1" type="primary">acsA</name>
    <name type="ordered locus">BMEI0238</name>
</gene>
<name>ACSA_BRUME</name>
<reference key="1">
    <citation type="journal article" date="2002" name="Proc. Natl. Acad. Sci. U.S.A.">
        <title>The genome sequence of the facultative intracellular pathogen Brucella melitensis.</title>
        <authorList>
            <person name="DelVecchio V.G."/>
            <person name="Kapatral V."/>
            <person name="Redkar R.J."/>
            <person name="Patra G."/>
            <person name="Mujer C."/>
            <person name="Los T."/>
            <person name="Ivanova N."/>
            <person name="Anderson I."/>
            <person name="Bhattacharyya A."/>
            <person name="Lykidis A."/>
            <person name="Reznik G."/>
            <person name="Jablonski L."/>
            <person name="Larsen N."/>
            <person name="D'Souza M."/>
            <person name="Bernal A."/>
            <person name="Mazur M."/>
            <person name="Goltsman E."/>
            <person name="Selkov E."/>
            <person name="Elzer P.H."/>
            <person name="Hagius S."/>
            <person name="O'Callaghan D."/>
            <person name="Letesson J.-J."/>
            <person name="Haselkorn R."/>
            <person name="Kyrpides N.C."/>
            <person name="Overbeek R."/>
        </authorList>
    </citation>
    <scope>NUCLEOTIDE SEQUENCE [LARGE SCALE GENOMIC DNA]</scope>
    <source>
        <strain>ATCC 23456 / CCUG 17765 / NCTC 10094 / 16M</strain>
    </source>
</reference>
<sequence length="651" mass="72790">MSEKLYPVLPEAKKNTLIDNETYLEWYEESVSDPDGFWAKHGRRIDWFKPFTKVKNTDFNGDVTIKWYEDGVTNVSYNCIDRHLKSRGDKVAIIWEGDNPYIDKKITYRELYENVCRMANVLKKHGVKKGDRVTIYLPMIPEAAYAMLACARIGAVHSVVFAGFSPEALAGRIVDCESTFVITADEGVRGGKPVALKENTDTAIDIAAKQYVMVNKVLVVRRTGGKVSWGRGRDLWYHQEVASVEPHCEPEPMNAEDPLFILYTSGSTGKPKGVLHTTGGYLVYASMTHQYVFDYHDGEIYWCTADVGWVTGHSYIVYGPLANGATTLMFEGVPNFPDQGRFWEVVDKHHVNIFYTAPTALRALMGAGDEFVTRSSRSTLRLLGSVGEPINPEAWEWYYNVVGDQKCPIVDTWWQTENGGILITPLPGATDLKPGSATRPFFGVKPVLVDNEGNVQEGVADGNLCISDSWPGQMRTVYGDHKRFIETYFSTYKGMYFSGDGCRRDEDGYYWITGRVDDVLNISGHRLGTAEIESALVSHHSVSEAAVVGYPHPIKGQGIYCYVTLMTGADAQDPDELRKELVQHVRKEIGPIATPDKIQFAPGLPKTRSGKIMRRILRKIAEDEFGALGDTSTLADRGVVDDLIENRQNKK</sequence>
<accession>Q8YJ48</accession>
<evidence type="ECO:0000255" key="1">
    <source>
        <dbReference type="HAMAP-Rule" id="MF_01123"/>
    </source>
</evidence>
<evidence type="ECO:0000305" key="2"/>
<comment type="function">
    <text evidence="1">Catalyzes the conversion of acetate into acetyl-CoA (AcCoA), an essential intermediate at the junction of anabolic and catabolic pathways. AcsA undergoes a two-step reaction. In the first half reaction, AcsA combines acetate with ATP to form acetyl-adenylate (AcAMP) intermediate. In the second half reaction, it can then transfer the acetyl group from AcAMP to the sulfhydryl group of CoA, forming the product AcCoA.</text>
</comment>
<comment type="catalytic activity">
    <reaction evidence="1">
        <text>acetate + ATP + CoA = acetyl-CoA + AMP + diphosphate</text>
        <dbReference type="Rhea" id="RHEA:23176"/>
        <dbReference type="ChEBI" id="CHEBI:30089"/>
        <dbReference type="ChEBI" id="CHEBI:30616"/>
        <dbReference type="ChEBI" id="CHEBI:33019"/>
        <dbReference type="ChEBI" id="CHEBI:57287"/>
        <dbReference type="ChEBI" id="CHEBI:57288"/>
        <dbReference type="ChEBI" id="CHEBI:456215"/>
        <dbReference type="EC" id="6.2.1.1"/>
    </reaction>
</comment>
<comment type="cofactor">
    <cofactor evidence="1">
        <name>Mg(2+)</name>
        <dbReference type="ChEBI" id="CHEBI:18420"/>
    </cofactor>
</comment>
<comment type="PTM">
    <text evidence="1">Acetylated. Deacetylation by the SIR2-homolog deacetylase activates the enzyme.</text>
</comment>
<comment type="similarity">
    <text evidence="1">Belongs to the ATP-dependent AMP-binding enzyme family.</text>
</comment>
<comment type="sequence caution" evidence="2">
    <conflict type="erroneous initiation">
        <sequence resource="EMBL-CDS" id="AAL51420"/>
    </conflict>
    <text>Extended N-terminus.</text>
</comment>